<evidence type="ECO:0000250" key="1"/>
<evidence type="ECO:0000255" key="2">
    <source>
        <dbReference type="PROSITE-ProRule" id="PRU01173"/>
    </source>
</evidence>
<evidence type="ECO:0000255" key="3">
    <source>
        <dbReference type="PROSITE-ProRule" id="PRU01240"/>
    </source>
</evidence>
<evidence type="ECO:0000305" key="4"/>
<accession>Q59149</accession>
<reference key="1">
    <citation type="journal article" date="2001" name="DNA Res.">
        <title>Complete genomic sequence of the filamentous nitrogen-fixing cyanobacterium Anabaena sp. strain PCC 7120.</title>
        <authorList>
            <person name="Kaneko T."/>
            <person name="Nakamura Y."/>
            <person name="Wolk C.P."/>
            <person name="Kuritz T."/>
            <person name="Sasamoto S."/>
            <person name="Watanabe A."/>
            <person name="Iriguchi M."/>
            <person name="Ishikawa A."/>
            <person name="Kawashima K."/>
            <person name="Kimura T."/>
            <person name="Kishida Y."/>
            <person name="Kohara M."/>
            <person name="Matsumoto M."/>
            <person name="Matsuno A."/>
            <person name="Muraki A."/>
            <person name="Nakazaki N."/>
            <person name="Shimpo S."/>
            <person name="Sugimoto M."/>
            <person name="Takazawa M."/>
            <person name="Yamada M."/>
            <person name="Yasuda M."/>
            <person name="Tabata S."/>
        </authorList>
    </citation>
    <scope>NUCLEOTIDE SEQUENCE [LARGE SCALE GENOMIC DNA]</scope>
    <source>
        <strain>PCC 7120 / SAG 25.82 / UTEX 2576</strain>
    </source>
</reference>
<reference key="2">
    <citation type="submission" date="1991-12" db="EMBL/GenBank/DDBJ databases">
        <authorList>
            <person name="Maldener I."/>
            <person name="Gerdes C."/>
            <person name="Lockau W."/>
        </authorList>
    </citation>
    <scope>NUCLEOTIDE SEQUENCE [GENOMIC DNA] OF 1-608</scope>
</reference>
<dbReference type="EC" id="3.4.21.-"/>
<dbReference type="EMBL" id="BA000019">
    <property type="protein sequence ID" value="BAB73338.1"/>
    <property type="molecule type" value="Genomic_DNA"/>
</dbReference>
<dbReference type="EMBL" id="X63439">
    <property type="protein sequence ID" value="CAA45036.1"/>
    <property type="molecule type" value="Genomic_DNA"/>
</dbReference>
<dbReference type="PIR" id="AB1979">
    <property type="entry name" value="AB1979"/>
</dbReference>
<dbReference type="RefSeq" id="WP_010995553.1">
    <property type="nucleotide sequence ID" value="NZ_RSCN01000029.1"/>
</dbReference>
<dbReference type="SMR" id="Q59149"/>
<dbReference type="STRING" id="103690.gene:10493396"/>
<dbReference type="MEROPS" id="S08.079"/>
<dbReference type="KEGG" id="ana:alr1381"/>
<dbReference type="eggNOG" id="COG1404">
    <property type="taxonomic scope" value="Bacteria"/>
</dbReference>
<dbReference type="eggNOG" id="COG4935">
    <property type="taxonomic scope" value="Bacteria"/>
</dbReference>
<dbReference type="OrthoDB" id="9798386at2"/>
<dbReference type="Proteomes" id="UP000002483">
    <property type="component" value="Chromosome"/>
</dbReference>
<dbReference type="GO" id="GO:0005737">
    <property type="term" value="C:cytoplasm"/>
    <property type="evidence" value="ECO:0007669"/>
    <property type="project" value="UniProtKB-SubCell"/>
</dbReference>
<dbReference type="GO" id="GO:0012505">
    <property type="term" value="C:endomembrane system"/>
    <property type="evidence" value="ECO:0007669"/>
    <property type="project" value="UniProtKB-ARBA"/>
</dbReference>
<dbReference type="GO" id="GO:0043231">
    <property type="term" value="C:intracellular membrane-bounded organelle"/>
    <property type="evidence" value="ECO:0007669"/>
    <property type="project" value="UniProtKB-ARBA"/>
</dbReference>
<dbReference type="GO" id="GO:0016020">
    <property type="term" value="C:membrane"/>
    <property type="evidence" value="ECO:0007669"/>
    <property type="project" value="TreeGrafter"/>
</dbReference>
<dbReference type="GO" id="GO:0004252">
    <property type="term" value="F:serine-type endopeptidase activity"/>
    <property type="evidence" value="ECO:0007669"/>
    <property type="project" value="InterPro"/>
</dbReference>
<dbReference type="GO" id="GO:0016485">
    <property type="term" value="P:protein processing"/>
    <property type="evidence" value="ECO:0007669"/>
    <property type="project" value="TreeGrafter"/>
</dbReference>
<dbReference type="CDD" id="cd07498">
    <property type="entry name" value="Peptidases_S8_15"/>
    <property type="match status" value="1"/>
</dbReference>
<dbReference type="Gene3D" id="2.60.120.260">
    <property type="entry name" value="Galactose-binding domain-like"/>
    <property type="match status" value="1"/>
</dbReference>
<dbReference type="Gene3D" id="3.40.50.200">
    <property type="entry name" value="Peptidase S8/S53 domain"/>
    <property type="match status" value="1"/>
</dbReference>
<dbReference type="InterPro" id="IPR008979">
    <property type="entry name" value="Galactose-bd-like_sf"/>
</dbReference>
<dbReference type="InterPro" id="IPR002884">
    <property type="entry name" value="P_dom"/>
</dbReference>
<dbReference type="InterPro" id="IPR034054">
    <property type="entry name" value="Pep_S8_PrcA"/>
</dbReference>
<dbReference type="InterPro" id="IPR000209">
    <property type="entry name" value="Peptidase_S8/S53_dom"/>
</dbReference>
<dbReference type="InterPro" id="IPR036852">
    <property type="entry name" value="Peptidase_S8/S53_dom_sf"/>
</dbReference>
<dbReference type="InterPro" id="IPR023827">
    <property type="entry name" value="Peptidase_S8_Asp-AS"/>
</dbReference>
<dbReference type="InterPro" id="IPR022398">
    <property type="entry name" value="Peptidase_S8_His-AS"/>
</dbReference>
<dbReference type="InterPro" id="IPR023828">
    <property type="entry name" value="Peptidase_S8_Ser-AS"/>
</dbReference>
<dbReference type="InterPro" id="IPR015500">
    <property type="entry name" value="Peptidase_S8_subtilisin-rel"/>
</dbReference>
<dbReference type="PANTHER" id="PTHR42884:SF14">
    <property type="entry name" value="NEUROENDOCRINE CONVERTASE 1"/>
    <property type="match status" value="1"/>
</dbReference>
<dbReference type="PANTHER" id="PTHR42884">
    <property type="entry name" value="PROPROTEIN CONVERTASE SUBTILISIN/KEXIN-RELATED"/>
    <property type="match status" value="1"/>
</dbReference>
<dbReference type="Pfam" id="PF01483">
    <property type="entry name" value="P_proprotein"/>
    <property type="match status" value="1"/>
</dbReference>
<dbReference type="Pfam" id="PF00082">
    <property type="entry name" value="Peptidase_S8"/>
    <property type="match status" value="1"/>
</dbReference>
<dbReference type="PRINTS" id="PR00723">
    <property type="entry name" value="SUBTILISIN"/>
</dbReference>
<dbReference type="SUPFAM" id="SSF49785">
    <property type="entry name" value="Galactose-binding domain-like"/>
    <property type="match status" value="1"/>
</dbReference>
<dbReference type="SUPFAM" id="SSF52743">
    <property type="entry name" value="Subtilisin-like"/>
    <property type="match status" value="1"/>
</dbReference>
<dbReference type="PROSITE" id="PS51829">
    <property type="entry name" value="P_HOMO_B"/>
    <property type="match status" value="1"/>
</dbReference>
<dbReference type="PROSITE" id="PS51892">
    <property type="entry name" value="SUBTILASE"/>
    <property type="match status" value="1"/>
</dbReference>
<dbReference type="PROSITE" id="PS00136">
    <property type="entry name" value="SUBTILASE_ASP"/>
    <property type="match status" value="1"/>
</dbReference>
<dbReference type="PROSITE" id="PS00137">
    <property type="entry name" value="SUBTILASE_HIS"/>
    <property type="match status" value="1"/>
</dbReference>
<dbReference type="PROSITE" id="PS00138">
    <property type="entry name" value="SUBTILASE_SER"/>
    <property type="match status" value="1"/>
</dbReference>
<sequence>MVHVRYGGQNGEQYELAISENHIVVRTESRSSLISDRPFEAAPVSSQARNILNQFELSTRFSQAGVEVLHVKEPSQDGALRDTAREILNQEPEVQFAGRVLIDPVSQQPIVYTENLFVKFGHEEDVSFCQEILGRYGLTIKRQLEYARNAYFVSAPPNTGLAIFDIAERLLNEESVELCHPELVREFRQRQAFSQQWHLKETTIGGKTIKAHANVEAAWKLSDGTGTIIAIIDDGVDVDHEEFRSSGKIVAPRDVTRKTNFPTPGNRDNHGTACAGVACGNGNFGASGVAPGAKLMPIRFVSALGSQDEADSFVWAAQNGADVISCSWGPPDGTWWDDKDPLHKQKVPLPDSTRLAMDYAINKGRNGKGCVILFAAGNGNESVDNDGYASYEKVIAVAACNDFGTRSAYSDFGQAVWCAFPSNNGNPSQTPGIWTADRSGVVGYNSGSTNLGDQAGNYTNSFGGTSSACPGAAGVAALILSRNPNLRWDEVRDIIKRSCDRIDPVGGNYNAEGRSPFYGYGRINALKAVELALPAQPEPVSIFTAVQDVPINDLQTSQLSLAIANTNPIKSIKVTVDIEHTYIGDLIVSLNPPGECGVLPIILHDRKGGGADDIKQTYDEVSTPGLTALKGKIPQGTWTLEVADKAQADTGKIRSLTIELGF</sequence>
<keyword id="KW-0106">Calcium</keyword>
<keyword id="KW-0963">Cytoplasm</keyword>
<keyword id="KW-0378">Hydrolase</keyword>
<keyword id="KW-0645">Protease</keyword>
<keyword id="KW-1185">Reference proteome</keyword>
<keyword id="KW-0720">Serine protease</keyword>
<keyword id="KW-0865">Zymogen</keyword>
<feature type="propeptide" id="PRO_0000027130">
    <location>
        <begin position="1"/>
        <end status="unknown"/>
    </location>
</feature>
<feature type="chain" id="PRO_0000027131" description="Calcium-dependent protease">
    <location>
        <begin status="unknown"/>
        <end position="662"/>
    </location>
</feature>
<feature type="domain" description="Peptidase S8" evidence="3">
    <location>
        <begin position="196"/>
        <end position="529"/>
    </location>
</feature>
<feature type="domain" description="P/Homo B" evidence="2">
    <location>
        <begin position="535"/>
        <end position="662"/>
    </location>
</feature>
<feature type="active site" description="Charge relay system">
    <location>
        <position position="233"/>
    </location>
</feature>
<feature type="active site" description="Charge relay system">
    <location>
        <position position="270"/>
    </location>
</feature>
<feature type="active site" description="Charge relay system">
    <location>
        <position position="466"/>
    </location>
</feature>
<comment type="function">
    <text evidence="1">Degrades phycobiliproteins in vitro. Has a substrate specificity similar to that of trypsin (By similarity).</text>
</comment>
<comment type="subcellular location">
    <subcellularLocation>
        <location evidence="1">Cytoplasm</location>
    </subcellularLocation>
</comment>
<comment type="similarity">
    <text evidence="4">Belongs to the peptidase S8 family.</text>
</comment>
<gene>
    <name type="primary">prcA</name>
    <name type="ordered locus">alr1381</name>
</gene>
<organism>
    <name type="scientific">Nostoc sp. (strain PCC 7120 / SAG 25.82 / UTEX 2576)</name>
    <dbReference type="NCBI Taxonomy" id="103690"/>
    <lineage>
        <taxon>Bacteria</taxon>
        <taxon>Bacillati</taxon>
        <taxon>Cyanobacteriota</taxon>
        <taxon>Cyanophyceae</taxon>
        <taxon>Nostocales</taxon>
        <taxon>Nostocaceae</taxon>
        <taxon>Nostoc</taxon>
    </lineage>
</organism>
<proteinExistence type="inferred from homology"/>
<protein>
    <recommendedName>
        <fullName>Calcium-dependent protease</fullName>
        <ecNumber>3.4.21.-</ecNumber>
    </recommendedName>
    <alternativeName>
        <fullName>Trypsin</fullName>
    </alternativeName>
</protein>
<name>PRCA_NOSS1</name>